<protein>
    <recommendedName>
        <fullName evidence="1">UvrABC system protein B</fullName>
        <shortName evidence="1">Protein UvrB</shortName>
    </recommendedName>
    <alternativeName>
        <fullName evidence="1">Excinuclease ABC subunit B</fullName>
    </alternativeName>
</protein>
<accession>Q9ZKA0</accession>
<organism>
    <name type="scientific">Helicobacter pylori (strain J99 / ATCC 700824)</name>
    <name type="common">Campylobacter pylori J99</name>
    <dbReference type="NCBI Taxonomy" id="85963"/>
    <lineage>
        <taxon>Bacteria</taxon>
        <taxon>Pseudomonadati</taxon>
        <taxon>Campylobacterota</taxon>
        <taxon>Epsilonproteobacteria</taxon>
        <taxon>Campylobacterales</taxon>
        <taxon>Helicobacteraceae</taxon>
        <taxon>Helicobacter</taxon>
    </lineage>
</organism>
<proteinExistence type="inferred from homology"/>
<feature type="chain" id="PRO_0000138397" description="UvrABC system protein B">
    <location>
        <begin position="1"/>
        <end position="658"/>
    </location>
</feature>
<feature type="domain" description="Helicase ATP-binding" evidence="1">
    <location>
        <begin position="25"/>
        <end position="416"/>
    </location>
</feature>
<feature type="domain" description="Helicase C-terminal" evidence="1">
    <location>
        <begin position="433"/>
        <end position="607"/>
    </location>
</feature>
<feature type="domain" description="UVR" evidence="1">
    <location>
        <begin position="623"/>
        <end position="658"/>
    </location>
</feature>
<feature type="short sequence motif" description="Beta-hairpin">
    <location>
        <begin position="91"/>
        <end position="114"/>
    </location>
</feature>
<feature type="binding site" evidence="1">
    <location>
        <begin position="38"/>
        <end position="45"/>
    </location>
    <ligand>
        <name>ATP</name>
        <dbReference type="ChEBI" id="CHEBI:30616"/>
    </ligand>
</feature>
<name>UVRB_HELPJ</name>
<keyword id="KW-0067">ATP-binding</keyword>
<keyword id="KW-0963">Cytoplasm</keyword>
<keyword id="KW-0227">DNA damage</keyword>
<keyword id="KW-0228">DNA excision</keyword>
<keyword id="KW-0234">DNA repair</keyword>
<keyword id="KW-0267">Excision nuclease</keyword>
<keyword id="KW-0547">Nucleotide-binding</keyword>
<keyword id="KW-0742">SOS response</keyword>
<dbReference type="EMBL" id="AE001439">
    <property type="protein sequence ID" value="AAD06620.1"/>
    <property type="molecule type" value="Genomic_DNA"/>
</dbReference>
<dbReference type="PIR" id="C71856">
    <property type="entry name" value="C71856"/>
</dbReference>
<dbReference type="RefSeq" id="WP_001127900.1">
    <property type="nucleotide sequence ID" value="NC_000921.1"/>
</dbReference>
<dbReference type="SMR" id="Q9ZKA0"/>
<dbReference type="KEGG" id="hpj:jhp_1041"/>
<dbReference type="PATRIC" id="fig|85963.30.peg.1548"/>
<dbReference type="eggNOG" id="COG0556">
    <property type="taxonomic scope" value="Bacteria"/>
</dbReference>
<dbReference type="Proteomes" id="UP000000804">
    <property type="component" value="Chromosome"/>
</dbReference>
<dbReference type="GO" id="GO:0005737">
    <property type="term" value="C:cytoplasm"/>
    <property type="evidence" value="ECO:0007669"/>
    <property type="project" value="UniProtKB-SubCell"/>
</dbReference>
<dbReference type="GO" id="GO:0009380">
    <property type="term" value="C:excinuclease repair complex"/>
    <property type="evidence" value="ECO:0007669"/>
    <property type="project" value="InterPro"/>
</dbReference>
<dbReference type="GO" id="GO:0005524">
    <property type="term" value="F:ATP binding"/>
    <property type="evidence" value="ECO:0007669"/>
    <property type="project" value="UniProtKB-UniRule"/>
</dbReference>
<dbReference type="GO" id="GO:0016887">
    <property type="term" value="F:ATP hydrolysis activity"/>
    <property type="evidence" value="ECO:0007669"/>
    <property type="project" value="InterPro"/>
</dbReference>
<dbReference type="GO" id="GO:0003677">
    <property type="term" value="F:DNA binding"/>
    <property type="evidence" value="ECO:0007669"/>
    <property type="project" value="UniProtKB-UniRule"/>
</dbReference>
<dbReference type="GO" id="GO:0009381">
    <property type="term" value="F:excinuclease ABC activity"/>
    <property type="evidence" value="ECO:0007669"/>
    <property type="project" value="UniProtKB-UniRule"/>
</dbReference>
<dbReference type="GO" id="GO:0006289">
    <property type="term" value="P:nucleotide-excision repair"/>
    <property type="evidence" value="ECO:0007669"/>
    <property type="project" value="UniProtKB-UniRule"/>
</dbReference>
<dbReference type="GO" id="GO:0009432">
    <property type="term" value="P:SOS response"/>
    <property type="evidence" value="ECO:0007669"/>
    <property type="project" value="UniProtKB-UniRule"/>
</dbReference>
<dbReference type="CDD" id="cd17916">
    <property type="entry name" value="DEXHc_UvrB"/>
    <property type="match status" value="1"/>
</dbReference>
<dbReference type="CDD" id="cd18790">
    <property type="entry name" value="SF2_C_UvrB"/>
    <property type="match status" value="1"/>
</dbReference>
<dbReference type="Gene3D" id="3.40.50.300">
    <property type="entry name" value="P-loop containing nucleotide triphosphate hydrolases"/>
    <property type="match status" value="3"/>
</dbReference>
<dbReference type="Gene3D" id="4.10.860.10">
    <property type="entry name" value="UVR domain"/>
    <property type="match status" value="1"/>
</dbReference>
<dbReference type="HAMAP" id="MF_00204">
    <property type="entry name" value="UvrB"/>
    <property type="match status" value="1"/>
</dbReference>
<dbReference type="InterPro" id="IPR006935">
    <property type="entry name" value="Helicase/UvrB_N"/>
</dbReference>
<dbReference type="InterPro" id="IPR014001">
    <property type="entry name" value="Helicase_ATP-bd"/>
</dbReference>
<dbReference type="InterPro" id="IPR001650">
    <property type="entry name" value="Helicase_C-like"/>
</dbReference>
<dbReference type="InterPro" id="IPR027417">
    <property type="entry name" value="P-loop_NTPase"/>
</dbReference>
<dbReference type="InterPro" id="IPR001943">
    <property type="entry name" value="UVR_dom"/>
</dbReference>
<dbReference type="InterPro" id="IPR036876">
    <property type="entry name" value="UVR_dom_sf"/>
</dbReference>
<dbReference type="InterPro" id="IPR004807">
    <property type="entry name" value="UvrB"/>
</dbReference>
<dbReference type="InterPro" id="IPR041471">
    <property type="entry name" value="UvrB_inter"/>
</dbReference>
<dbReference type="InterPro" id="IPR024759">
    <property type="entry name" value="UvrB_YAD/RRR_dom"/>
</dbReference>
<dbReference type="NCBIfam" id="NF003673">
    <property type="entry name" value="PRK05298.1"/>
    <property type="match status" value="1"/>
</dbReference>
<dbReference type="NCBIfam" id="TIGR00631">
    <property type="entry name" value="uvrb"/>
    <property type="match status" value="1"/>
</dbReference>
<dbReference type="PANTHER" id="PTHR24029">
    <property type="entry name" value="UVRABC SYSTEM PROTEIN B"/>
    <property type="match status" value="1"/>
</dbReference>
<dbReference type="PANTHER" id="PTHR24029:SF0">
    <property type="entry name" value="UVRABC SYSTEM PROTEIN B"/>
    <property type="match status" value="1"/>
</dbReference>
<dbReference type="Pfam" id="PF00271">
    <property type="entry name" value="Helicase_C"/>
    <property type="match status" value="1"/>
</dbReference>
<dbReference type="Pfam" id="PF04851">
    <property type="entry name" value="ResIII"/>
    <property type="match status" value="1"/>
</dbReference>
<dbReference type="Pfam" id="PF02151">
    <property type="entry name" value="UVR"/>
    <property type="match status" value="1"/>
</dbReference>
<dbReference type="Pfam" id="PF12344">
    <property type="entry name" value="UvrB"/>
    <property type="match status" value="1"/>
</dbReference>
<dbReference type="Pfam" id="PF17757">
    <property type="entry name" value="UvrB_inter"/>
    <property type="match status" value="1"/>
</dbReference>
<dbReference type="SMART" id="SM00487">
    <property type="entry name" value="DEXDc"/>
    <property type="match status" value="1"/>
</dbReference>
<dbReference type="SMART" id="SM00490">
    <property type="entry name" value="HELICc"/>
    <property type="match status" value="1"/>
</dbReference>
<dbReference type="SUPFAM" id="SSF46600">
    <property type="entry name" value="C-terminal UvrC-binding domain of UvrB"/>
    <property type="match status" value="1"/>
</dbReference>
<dbReference type="SUPFAM" id="SSF52540">
    <property type="entry name" value="P-loop containing nucleoside triphosphate hydrolases"/>
    <property type="match status" value="2"/>
</dbReference>
<dbReference type="PROSITE" id="PS51192">
    <property type="entry name" value="HELICASE_ATP_BIND_1"/>
    <property type="match status" value="2"/>
</dbReference>
<dbReference type="PROSITE" id="PS51194">
    <property type="entry name" value="HELICASE_CTER"/>
    <property type="match status" value="1"/>
</dbReference>
<dbReference type="PROSITE" id="PS50151">
    <property type="entry name" value="UVR"/>
    <property type="match status" value="1"/>
</dbReference>
<comment type="function">
    <text evidence="1">The UvrABC repair system catalyzes the recognition and processing of DNA lesions. A damage recognition complex composed of 2 UvrA and 2 UvrB subunits scans DNA for abnormalities. Upon binding of the UvrA(2)B(2) complex to a putative damaged site, the DNA wraps around one UvrB monomer. DNA wrap is dependent on ATP binding by UvrB and probably causes local melting of the DNA helix, facilitating insertion of UvrB beta-hairpin between the DNA strands. Then UvrB probes one DNA strand for the presence of a lesion. If a lesion is found the UvrA subunits dissociate and the UvrB-DNA preincision complex is formed. This complex is subsequently bound by UvrC and the second UvrB is released. If no lesion is found, the DNA wraps around the other UvrB subunit that will check the other stand for damage.</text>
</comment>
<comment type="subunit">
    <text evidence="1">Forms a heterotetramer with UvrA during the search for lesions. Interacts with UvrC in an incision complex.</text>
</comment>
<comment type="subcellular location">
    <subcellularLocation>
        <location evidence="1">Cytoplasm</location>
    </subcellularLocation>
</comment>
<comment type="domain">
    <text evidence="1">The beta-hairpin motif is involved in DNA binding.</text>
</comment>
<comment type="similarity">
    <text evidence="1">Belongs to the UvrB family.</text>
</comment>
<sequence length="658" mass="75927">MPLFDLKSPYPPAGDQPQAIEALTKSLKNNNHYQTLVGVTGSGKTYTMANIIAQTNKPALIMSHNKTLCAQLYSEFKAFFPHNRVEYFISHFDYYQPESYIPRRDLFIEKDSSINDDLERLRLSATTSLLGYDDVIVIASVSANYGLGNPEEYLKVMEKIKVGEKRAYKSFLLKLVEMGYSRNEVVFDRGSFRATGECVDIFPAYNDAEFIRIEFFGDEIERIAVFDALERNEIKRLDSVMLYAASQFAVGSERLNLAVKSIEDELALRLKFFKEQDKMLEYNRLKQRTEYDLEMISATGVCKGIENYARHFTGKAPNETPFCLFDYLGIFEREFLVIVDESHVSLPQFGGMYAGDMSRKSVLVEYGFRLPSALDNRPLKFDEFIHKNCQFLFVSATPNKLELELSQKNVAEQIIRPTGLLDPKFEVRDSDKQVQDLFDEIKSVVARGERVLITTLTKKMAEELCKYYAEWGLKVRYMHSEIDAIERNHIIRSLRLKEFDVLIGINLLREGLDLPEVSLVAIMDADKEGFLRSETSLIQTMGRAARNANGKVLLYAKKTTQSMQKAFEITSYRRAKQEEFNKIHNITPKTVTRALEEELKLRDDEIKIAKALKKDKMPKSEREKIIKELDKKMRERAKNLDFEEAMRLRDEIAQLRTL</sequence>
<evidence type="ECO:0000255" key="1">
    <source>
        <dbReference type="HAMAP-Rule" id="MF_00204"/>
    </source>
</evidence>
<gene>
    <name evidence="1" type="primary">uvrB</name>
    <name type="ordered locus">jhp_1041</name>
</gene>
<reference key="1">
    <citation type="journal article" date="1999" name="Nature">
        <title>Genomic sequence comparison of two unrelated isolates of the human gastric pathogen Helicobacter pylori.</title>
        <authorList>
            <person name="Alm R.A."/>
            <person name="Ling L.-S.L."/>
            <person name="Moir D.T."/>
            <person name="King B.L."/>
            <person name="Brown E.D."/>
            <person name="Doig P.C."/>
            <person name="Smith D.R."/>
            <person name="Noonan B."/>
            <person name="Guild B.C."/>
            <person name="deJonge B.L."/>
            <person name="Carmel G."/>
            <person name="Tummino P.J."/>
            <person name="Caruso A."/>
            <person name="Uria-Nickelsen M."/>
            <person name="Mills D.M."/>
            <person name="Ives C."/>
            <person name="Gibson R."/>
            <person name="Merberg D."/>
            <person name="Mills S.D."/>
            <person name="Jiang Q."/>
            <person name="Taylor D.E."/>
            <person name="Vovis G.F."/>
            <person name="Trust T.J."/>
        </authorList>
    </citation>
    <scope>NUCLEOTIDE SEQUENCE [LARGE SCALE GENOMIC DNA]</scope>
    <source>
        <strain>J99 / ATCC 700824</strain>
    </source>
</reference>